<sequence length="837" mass="94659">MAGLLKKIFESGKKDVKYLERKADEIIALADETAALSDDALREKTVEFKERVQKGETLDDLLVEAFAVAREGAKRALGLYPFKVQLMGGIVLHEGNIAEMKTGEGKTLTATLPVYLNALSGEGVHVVTVNEYLAHRDAEEMGVLYNFLGLSVGLNLNALSSTEKREAYACDITYSTNNELGFDYLRDNMVVYKEEMVQRPLAFAVIDEVDSILVDEARTPLIISGEAEKSTILYVRANTFVRTLTEEEDYTVDIKTKSVQLTEDGMTKGENYFDVENLFDLENTVILHHIAQALKANYTMSLDVDYVVQDDEVLIVDQFTGRIMKGRRFSEGLHQALEAKEGVTIQNESKTMATITFQNYFRMYKKLAGMTGTAKTEEEEFRDIYNMRVIEIPTNKVIIRDDRPDLIYTTIEAKFNAVVEDIAERHAKGQPVLVGTVAIETSELISSKLKRKGIKHDVLNAKQHEREADIIKHAGERGAVVIATNMAGRGTDIKLGEGTIEAGGLAVIGTERHESRRIDNQLRGRSGRQGDPGVTQFYLSMEDELMRRFGSDNMKSMMERFGMAEDAIQSKMVSRAVESAQRRVEGNNFDSRKQVLQYDDVLRQQREVIYKQRYEVINAENSLREIIEQMIQRTVNFIVSSNASSHEPEEAWNLQGIIDYVDANLLPEGTITLEDLQNRTSEDIQNLILDKIKAAYDEKETLLPPEEFNEFEKVVLLRVVDTKWVDHIDAMDHLRDGIHLRAYGQIDPLREYQSEGFEMFEAMVSSIDEDVARYIMKAEIRQNLEREQVAKGEAINPAEGKPEAKRQPIRKDQHIGRNDPCPCGSGKKYKNCHGKEA</sequence>
<gene>
    <name evidence="1" type="primary">secA1</name>
    <name type="ordered locus">lmo2510</name>
</gene>
<organism>
    <name type="scientific">Listeria monocytogenes serovar 1/2a (strain ATCC BAA-679 / EGD-e)</name>
    <dbReference type="NCBI Taxonomy" id="169963"/>
    <lineage>
        <taxon>Bacteria</taxon>
        <taxon>Bacillati</taxon>
        <taxon>Bacillota</taxon>
        <taxon>Bacilli</taxon>
        <taxon>Bacillales</taxon>
        <taxon>Listeriaceae</taxon>
        <taxon>Listeria</taxon>
    </lineage>
</organism>
<evidence type="ECO:0000255" key="1">
    <source>
        <dbReference type="HAMAP-Rule" id="MF_01382"/>
    </source>
</evidence>
<evidence type="ECO:0000256" key="2">
    <source>
        <dbReference type="SAM" id="MobiDB-lite"/>
    </source>
</evidence>
<evidence type="ECO:0000305" key="3"/>
<dbReference type="EC" id="7.4.2.8" evidence="1"/>
<dbReference type="EMBL" id="L32090">
    <property type="protein sequence ID" value="AAA50286.1"/>
    <property type="molecule type" value="Genomic_DNA"/>
</dbReference>
<dbReference type="EMBL" id="AL591983">
    <property type="protein sequence ID" value="CAD00588.1"/>
    <property type="molecule type" value="Genomic_DNA"/>
</dbReference>
<dbReference type="PIR" id="AF1388">
    <property type="entry name" value="AF1388"/>
</dbReference>
<dbReference type="SMR" id="P47847"/>
<dbReference type="STRING" id="169963.gene:17595221"/>
<dbReference type="PaxDb" id="169963-lmo2510"/>
<dbReference type="EnsemblBacteria" id="CAD00588">
    <property type="protein sequence ID" value="CAD00588"/>
    <property type="gene ID" value="CAD00588"/>
</dbReference>
<dbReference type="KEGG" id="lmo:lmo2510"/>
<dbReference type="PATRIC" id="fig|169963.11.peg.2570"/>
<dbReference type="eggNOG" id="COG0653">
    <property type="taxonomic scope" value="Bacteria"/>
</dbReference>
<dbReference type="HOGENOM" id="CLU_005314_3_0_9"/>
<dbReference type="OrthoDB" id="9805579at2"/>
<dbReference type="PhylomeDB" id="P47847"/>
<dbReference type="BioCyc" id="LMON169963:LMO2510-MONOMER"/>
<dbReference type="Proteomes" id="UP000000817">
    <property type="component" value="Chromosome"/>
</dbReference>
<dbReference type="GO" id="GO:0031522">
    <property type="term" value="C:cell envelope Sec protein transport complex"/>
    <property type="evidence" value="ECO:0000318"/>
    <property type="project" value="GO_Central"/>
</dbReference>
<dbReference type="GO" id="GO:0005737">
    <property type="term" value="C:cytoplasm"/>
    <property type="evidence" value="ECO:0007669"/>
    <property type="project" value="UniProtKB-SubCell"/>
</dbReference>
<dbReference type="GO" id="GO:0005886">
    <property type="term" value="C:plasma membrane"/>
    <property type="evidence" value="ECO:0000318"/>
    <property type="project" value="GO_Central"/>
</dbReference>
<dbReference type="GO" id="GO:0005524">
    <property type="term" value="F:ATP binding"/>
    <property type="evidence" value="ECO:0000318"/>
    <property type="project" value="GO_Central"/>
</dbReference>
<dbReference type="GO" id="GO:0046872">
    <property type="term" value="F:metal ion binding"/>
    <property type="evidence" value="ECO:0007669"/>
    <property type="project" value="UniProtKB-KW"/>
</dbReference>
<dbReference type="GO" id="GO:0008564">
    <property type="term" value="F:protein-exporting ATPase activity"/>
    <property type="evidence" value="ECO:0007669"/>
    <property type="project" value="UniProtKB-EC"/>
</dbReference>
<dbReference type="GO" id="GO:0065002">
    <property type="term" value="P:intracellular protein transmembrane transport"/>
    <property type="evidence" value="ECO:0007669"/>
    <property type="project" value="UniProtKB-UniRule"/>
</dbReference>
<dbReference type="GO" id="GO:0017038">
    <property type="term" value="P:protein import"/>
    <property type="evidence" value="ECO:0007669"/>
    <property type="project" value="InterPro"/>
</dbReference>
<dbReference type="GO" id="GO:0006605">
    <property type="term" value="P:protein targeting"/>
    <property type="evidence" value="ECO:0007669"/>
    <property type="project" value="UniProtKB-UniRule"/>
</dbReference>
<dbReference type="GO" id="GO:0043952">
    <property type="term" value="P:protein transport by the Sec complex"/>
    <property type="evidence" value="ECO:0000318"/>
    <property type="project" value="GO_Central"/>
</dbReference>
<dbReference type="CDD" id="cd17928">
    <property type="entry name" value="DEXDc_SecA"/>
    <property type="match status" value="1"/>
</dbReference>
<dbReference type="CDD" id="cd18803">
    <property type="entry name" value="SF2_C_secA"/>
    <property type="match status" value="1"/>
</dbReference>
<dbReference type="FunFam" id="1.10.3060.10:FF:000002">
    <property type="entry name" value="Preprotein translocase subunit SecA"/>
    <property type="match status" value="1"/>
</dbReference>
<dbReference type="FunFam" id="3.40.50.300:FF:000429">
    <property type="entry name" value="Preprotein translocase subunit SecA"/>
    <property type="match status" value="1"/>
</dbReference>
<dbReference type="FunFam" id="3.90.1440.10:FF:000001">
    <property type="entry name" value="Preprotein translocase subunit SecA"/>
    <property type="match status" value="1"/>
</dbReference>
<dbReference type="Gene3D" id="1.10.3060.10">
    <property type="entry name" value="Helical scaffold and wing domains of SecA"/>
    <property type="match status" value="1"/>
</dbReference>
<dbReference type="Gene3D" id="3.40.50.300">
    <property type="entry name" value="P-loop containing nucleotide triphosphate hydrolases"/>
    <property type="match status" value="3"/>
</dbReference>
<dbReference type="Gene3D" id="3.90.1440.10">
    <property type="entry name" value="SecA, preprotein cross-linking domain"/>
    <property type="match status" value="1"/>
</dbReference>
<dbReference type="HAMAP" id="MF_01382">
    <property type="entry name" value="SecA"/>
    <property type="match status" value="1"/>
</dbReference>
<dbReference type="InterPro" id="IPR014001">
    <property type="entry name" value="Helicase_ATP-bd"/>
</dbReference>
<dbReference type="InterPro" id="IPR001650">
    <property type="entry name" value="Helicase_C-like"/>
</dbReference>
<dbReference type="InterPro" id="IPR027417">
    <property type="entry name" value="P-loop_NTPase"/>
</dbReference>
<dbReference type="InterPro" id="IPR004027">
    <property type="entry name" value="SEC_C_motif"/>
</dbReference>
<dbReference type="InterPro" id="IPR000185">
    <property type="entry name" value="SecA"/>
</dbReference>
<dbReference type="InterPro" id="IPR020937">
    <property type="entry name" value="SecA_CS"/>
</dbReference>
<dbReference type="InterPro" id="IPR011115">
    <property type="entry name" value="SecA_DEAD"/>
</dbReference>
<dbReference type="InterPro" id="IPR014018">
    <property type="entry name" value="SecA_motor_DEAD"/>
</dbReference>
<dbReference type="InterPro" id="IPR011130">
    <property type="entry name" value="SecA_preprotein_X-link_dom"/>
</dbReference>
<dbReference type="InterPro" id="IPR044722">
    <property type="entry name" value="SecA_SF2_C"/>
</dbReference>
<dbReference type="InterPro" id="IPR011116">
    <property type="entry name" value="SecA_Wing/Scaffold"/>
</dbReference>
<dbReference type="InterPro" id="IPR036266">
    <property type="entry name" value="SecA_Wing/Scaffold_sf"/>
</dbReference>
<dbReference type="InterPro" id="IPR036670">
    <property type="entry name" value="SecA_X-link_sf"/>
</dbReference>
<dbReference type="NCBIfam" id="NF006630">
    <property type="entry name" value="PRK09200.1"/>
    <property type="match status" value="1"/>
</dbReference>
<dbReference type="NCBIfam" id="NF009538">
    <property type="entry name" value="PRK12904.1"/>
    <property type="match status" value="1"/>
</dbReference>
<dbReference type="NCBIfam" id="TIGR00963">
    <property type="entry name" value="secA"/>
    <property type="match status" value="1"/>
</dbReference>
<dbReference type="PANTHER" id="PTHR30612:SF0">
    <property type="entry name" value="CHLOROPLAST PROTEIN-TRANSPORTING ATPASE"/>
    <property type="match status" value="1"/>
</dbReference>
<dbReference type="PANTHER" id="PTHR30612">
    <property type="entry name" value="SECA INNER MEMBRANE COMPONENT OF SEC PROTEIN SECRETION SYSTEM"/>
    <property type="match status" value="1"/>
</dbReference>
<dbReference type="Pfam" id="PF21090">
    <property type="entry name" value="P-loop_SecA"/>
    <property type="match status" value="2"/>
</dbReference>
<dbReference type="Pfam" id="PF02810">
    <property type="entry name" value="SEC-C"/>
    <property type="match status" value="1"/>
</dbReference>
<dbReference type="Pfam" id="PF07517">
    <property type="entry name" value="SecA_DEAD"/>
    <property type="match status" value="1"/>
</dbReference>
<dbReference type="Pfam" id="PF01043">
    <property type="entry name" value="SecA_PP_bind"/>
    <property type="match status" value="1"/>
</dbReference>
<dbReference type="Pfam" id="PF07516">
    <property type="entry name" value="SecA_SW"/>
    <property type="match status" value="1"/>
</dbReference>
<dbReference type="PRINTS" id="PR00906">
    <property type="entry name" value="SECA"/>
</dbReference>
<dbReference type="SMART" id="SM00490">
    <property type="entry name" value="HELICc"/>
    <property type="match status" value="1"/>
</dbReference>
<dbReference type="SMART" id="SM00957">
    <property type="entry name" value="SecA_DEAD"/>
    <property type="match status" value="1"/>
</dbReference>
<dbReference type="SMART" id="SM00958">
    <property type="entry name" value="SecA_PP_bind"/>
    <property type="match status" value="1"/>
</dbReference>
<dbReference type="SUPFAM" id="SSF81886">
    <property type="entry name" value="Helical scaffold and wing domains of SecA"/>
    <property type="match status" value="1"/>
</dbReference>
<dbReference type="SUPFAM" id="SSF52540">
    <property type="entry name" value="P-loop containing nucleoside triphosphate hydrolases"/>
    <property type="match status" value="2"/>
</dbReference>
<dbReference type="SUPFAM" id="SSF81767">
    <property type="entry name" value="Pre-protein crosslinking domain of SecA"/>
    <property type="match status" value="1"/>
</dbReference>
<dbReference type="PROSITE" id="PS01312">
    <property type="entry name" value="SECA"/>
    <property type="match status" value="1"/>
</dbReference>
<dbReference type="PROSITE" id="PS51196">
    <property type="entry name" value="SECA_MOTOR_DEAD"/>
    <property type="match status" value="1"/>
</dbReference>
<protein>
    <recommendedName>
        <fullName evidence="1">Protein translocase subunit SecA 1</fullName>
        <ecNumber evidence="1">7.4.2.8</ecNumber>
    </recommendedName>
</protein>
<comment type="function">
    <text evidence="1">Part of the Sec protein translocase complex. Interacts with the SecYEG preprotein conducting channel. Has a central role in coupling the hydrolysis of ATP to the transfer of proteins into and across the cell membrane, serving as an ATP-driven molecular motor driving the stepwise translocation of polypeptide chains across the membrane.</text>
</comment>
<comment type="catalytic activity">
    <reaction evidence="1">
        <text>ATP + H2O + cellular proteinSide 1 = ADP + phosphate + cellular proteinSide 2.</text>
        <dbReference type="EC" id="7.4.2.8"/>
    </reaction>
</comment>
<comment type="cofactor">
    <cofactor evidence="1">
        <name>Zn(2+)</name>
        <dbReference type="ChEBI" id="CHEBI:29105"/>
    </cofactor>
    <text evidence="1">May bind 1 zinc ion per subunit.</text>
</comment>
<comment type="subunit">
    <text evidence="1">Monomer and homodimer. Part of the essential Sec protein translocation apparatus which comprises SecA, SecYEG and auxiliary proteins SecDF. Other proteins may also be involved.</text>
</comment>
<comment type="subcellular location">
    <subcellularLocation>
        <location evidence="1">Cell membrane</location>
        <topology evidence="1">Peripheral membrane protein</topology>
        <orientation evidence="1">Cytoplasmic side</orientation>
    </subcellularLocation>
    <subcellularLocation>
        <location evidence="1">Cytoplasm</location>
    </subcellularLocation>
    <text evidence="1">Distribution is 50-50.</text>
</comment>
<comment type="similarity">
    <text evidence="1">Belongs to the SecA family.</text>
</comment>
<keyword id="KW-0067">ATP-binding</keyword>
<keyword id="KW-1003">Cell membrane</keyword>
<keyword id="KW-0963">Cytoplasm</keyword>
<keyword id="KW-0472">Membrane</keyword>
<keyword id="KW-0479">Metal-binding</keyword>
<keyword id="KW-0547">Nucleotide-binding</keyword>
<keyword id="KW-0653">Protein transport</keyword>
<keyword id="KW-1185">Reference proteome</keyword>
<keyword id="KW-1278">Translocase</keyword>
<keyword id="KW-0811">Translocation</keyword>
<keyword id="KW-0813">Transport</keyword>
<keyword id="KW-0862">Zinc</keyword>
<proteinExistence type="inferred from homology"/>
<name>SECA1_LISMO</name>
<accession>P47847</accession>
<reference key="1">
    <citation type="submission" date="1994-10" db="EMBL/GenBank/DDBJ databases">
        <title>Isolation and characterization of the secA gene from Listeria monocytogenes.</title>
        <authorList>
            <person name="Owens M.U."/>
            <person name="Berkaw M.N."/>
            <person name="Schmidt M.G."/>
        </authorList>
    </citation>
    <scope>NUCLEOTIDE SEQUENCE [GENOMIC DNA]</scope>
</reference>
<reference key="2">
    <citation type="journal article" date="2001" name="Science">
        <title>Comparative genomics of Listeria species.</title>
        <authorList>
            <person name="Glaser P."/>
            <person name="Frangeul L."/>
            <person name="Buchrieser C."/>
            <person name="Rusniok C."/>
            <person name="Amend A."/>
            <person name="Baquero F."/>
            <person name="Berche P."/>
            <person name="Bloecker H."/>
            <person name="Brandt P."/>
            <person name="Chakraborty T."/>
            <person name="Charbit A."/>
            <person name="Chetouani F."/>
            <person name="Couve E."/>
            <person name="de Daruvar A."/>
            <person name="Dehoux P."/>
            <person name="Domann E."/>
            <person name="Dominguez-Bernal G."/>
            <person name="Duchaud E."/>
            <person name="Durant L."/>
            <person name="Dussurget O."/>
            <person name="Entian K.-D."/>
            <person name="Fsihi H."/>
            <person name="Garcia-del Portillo F."/>
            <person name="Garrido P."/>
            <person name="Gautier L."/>
            <person name="Goebel W."/>
            <person name="Gomez-Lopez N."/>
            <person name="Hain T."/>
            <person name="Hauf J."/>
            <person name="Jackson D."/>
            <person name="Jones L.-M."/>
            <person name="Kaerst U."/>
            <person name="Kreft J."/>
            <person name="Kuhn M."/>
            <person name="Kunst F."/>
            <person name="Kurapkat G."/>
            <person name="Madueno E."/>
            <person name="Maitournam A."/>
            <person name="Mata Vicente J."/>
            <person name="Ng E."/>
            <person name="Nedjari H."/>
            <person name="Nordsiek G."/>
            <person name="Novella S."/>
            <person name="de Pablos B."/>
            <person name="Perez-Diaz J.-C."/>
            <person name="Purcell R."/>
            <person name="Remmel B."/>
            <person name="Rose M."/>
            <person name="Schlueter T."/>
            <person name="Simoes N."/>
            <person name="Tierrez A."/>
            <person name="Vazquez-Boland J.-A."/>
            <person name="Voss H."/>
            <person name="Wehland J."/>
            <person name="Cossart P."/>
        </authorList>
    </citation>
    <scope>NUCLEOTIDE SEQUENCE [LARGE SCALE GENOMIC DNA]</scope>
    <source>
        <strain>ATCC BAA-679 / EGD-e</strain>
    </source>
</reference>
<feature type="chain" id="PRO_0000109590" description="Protein translocase subunit SecA 1">
    <location>
        <begin position="1"/>
        <end position="837"/>
    </location>
</feature>
<feature type="region of interest" description="Disordered" evidence="2">
    <location>
        <begin position="791"/>
        <end position="837"/>
    </location>
</feature>
<feature type="compositionally biased region" description="Basic and acidic residues" evidence="2">
    <location>
        <begin position="800"/>
        <end position="817"/>
    </location>
</feature>
<feature type="compositionally biased region" description="Basic residues" evidence="2">
    <location>
        <begin position="827"/>
        <end position="837"/>
    </location>
</feature>
<feature type="binding site" evidence="1">
    <location>
        <position position="85"/>
    </location>
    <ligand>
        <name>ATP</name>
        <dbReference type="ChEBI" id="CHEBI:30616"/>
    </ligand>
</feature>
<feature type="binding site" evidence="1">
    <location>
        <begin position="103"/>
        <end position="107"/>
    </location>
    <ligand>
        <name>ATP</name>
        <dbReference type="ChEBI" id="CHEBI:30616"/>
    </ligand>
</feature>
<feature type="binding site" evidence="1">
    <location>
        <position position="492"/>
    </location>
    <ligand>
        <name>ATP</name>
        <dbReference type="ChEBI" id="CHEBI:30616"/>
    </ligand>
</feature>
<feature type="binding site" evidence="1">
    <location>
        <position position="821"/>
    </location>
    <ligand>
        <name>Zn(2+)</name>
        <dbReference type="ChEBI" id="CHEBI:29105"/>
    </ligand>
</feature>
<feature type="binding site" evidence="1">
    <location>
        <position position="823"/>
    </location>
    <ligand>
        <name>Zn(2+)</name>
        <dbReference type="ChEBI" id="CHEBI:29105"/>
    </ligand>
</feature>
<feature type="binding site" evidence="1">
    <location>
        <position position="832"/>
    </location>
    <ligand>
        <name>Zn(2+)</name>
        <dbReference type="ChEBI" id="CHEBI:29105"/>
    </ligand>
</feature>
<feature type="binding site" evidence="1">
    <location>
        <position position="833"/>
    </location>
    <ligand>
        <name>Zn(2+)</name>
        <dbReference type="ChEBI" id="CHEBI:29105"/>
    </ligand>
</feature>
<feature type="sequence conflict" description="In Ref. 1; AAA50286." evidence="3" ref="1">
    <original>G</original>
    <variation>D</variation>
    <location>
        <position position="95"/>
    </location>
</feature>
<feature type="sequence conflict" description="In Ref. 1; AAA50286." evidence="3" ref="1">
    <original>I</original>
    <variation>M</variation>
    <location>
        <position position="411"/>
    </location>
</feature>
<feature type="sequence conflict" description="In Ref. 1; AAA50286." evidence="3" ref="1">
    <original>IETS</original>
    <variation>MNI</variation>
    <location>
        <begin position="439"/>
        <end position="442"/>
    </location>
</feature>